<name>MRAY_NOCSJ</name>
<dbReference type="EC" id="2.7.8.13" evidence="1"/>
<dbReference type="EMBL" id="CP000509">
    <property type="protein sequence ID" value="ABL82568.1"/>
    <property type="molecule type" value="Genomic_DNA"/>
</dbReference>
<dbReference type="RefSeq" id="WP_011756502.1">
    <property type="nucleotide sequence ID" value="NC_008699.1"/>
</dbReference>
<dbReference type="SMR" id="A1SL83"/>
<dbReference type="STRING" id="196162.Noca_3066"/>
<dbReference type="KEGG" id="nca:Noca_3066"/>
<dbReference type="eggNOG" id="COG0472">
    <property type="taxonomic scope" value="Bacteria"/>
</dbReference>
<dbReference type="HOGENOM" id="CLU_023982_0_1_11"/>
<dbReference type="OrthoDB" id="9805475at2"/>
<dbReference type="UniPathway" id="UPA00219"/>
<dbReference type="Proteomes" id="UP000000640">
    <property type="component" value="Chromosome"/>
</dbReference>
<dbReference type="GO" id="GO:0005886">
    <property type="term" value="C:plasma membrane"/>
    <property type="evidence" value="ECO:0007669"/>
    <property type="project" value="UniProtKB-SubCell"/>
</dbReference>
<dbReference type="GO" id="GO:0046872">
    <property type="term" value="F:metal ion binding"/>
    <property type="evidence" value="ECO:0007669"/>
    <property type="project" value="UniProtKB-KW"/>
</dbReference>
<dbReference type="GO" id="GO:0008963">
    <property type="term" value="F:phospho-N-acetylmuramoyl-pentapeptide-transferase activity"/>
    <property type="evidence" value="ECO:0007669"/>
    <property type="project" value="UniProtKB-UniRule"/>
</dbReference>
<dbReference type="GO" id="GO:0051992">
    <property type="term" value="F:UDP-N-acetylmuramoyl-L-alanyl-D-glutamyl-meso-2,6-diaminopimelyl-D-alanyl-D-alanine:undecaprenyl-phosphate transferase activity"/>
    <property type="evidence" value="ECO:0007669"/>
    <property type="project" value="RHEA"/>
</dbReference>
<dbReference type="GO" id="GO:0051301">
    <property type="term" value="P:cell division"/>
    <property type="evidence" value="ECO:0007669"/>
    <property type="project" value="UniProtKB-KW"/>
</dbReference>
<dbReference type="GO" id="GO:0071555">
    <property type="term" value="P:cell wall organization"/>
    <property type="evidence" value="ECO:0007669"/>
    <property type="project" value="UniProtKB-KW"/>
</dbReference>
<dbReference type="GO" id="GO:0009252">
    <property type="term" value="P:peptidoglycan biosynthetic process"/>
    <property type="evidence" value="ECO:0007669"/>
    <property type="project" value="UniProtKB-UniRule"/>
</dbReference>
<dbReference type="GO" id="GO:0008360">
    <property type="term" value="P:regulation of cell shape"/>
    <property type="evidence" value="ECO:0007669"/>
    <property type="project" value="UniProtKB-KW"/>
</dbReference>
<dbReference type="CDD" id="cd06852">
    <property type="entry name" value="GT_MraY"/>
    <property type="match status" value="1"/>
</dbReference>
<dbReference type="HAMAP" id="MF_00038">
    <property type="entry name" value="MraY"/>
    <property type="match status" value="1"/>
</dbReference>
<dbReference type="InterPro" id="IPR000715">
    <property type="entry name" value="Glycosyl_transferase_4"/>
</dbReference>
<dbReference type="InterPro" id="IPR003524">
    <property type="entry name" value="PNAcMuramoyl-5peptid_Trfase"/>
</dbReference>
<dbReference type="InterPro" id="IPR018480">
    <property type="entry name" value="PNAcMuramoyl-5peptid_Trfase_CS"/>
</dbReference>
<dbReference type="NCBIfam" id="TIGR00445">
    <property type="entry name" value="mraY"/>
    <property type="match status" value="1"/>
</dbReference>
<dbReference type="PANTHER" id="PTHR22926">
    <property type="entry name" value="PHOSPHO-N-ACETYLMURAMOYL-PENTAPEPTIDE-TRANSFERASE"/>
    <property type="match status" value="1"/>
</dbReference>
<dbReference type="PANTHER" id="PTHR22926:SF5">
    <property type="entry name" value="PHOSPHO-N-ACETYLMURAMOYL-PENTAPEPTIDE-TRANSFERASE HOMOLOG"/>
    <property type="match status" value="1"/>
</dbReference>
<dbReference type="Pfam" id="PF00953">
    <property type="entry name" value="Glycos_transf_4"/>
    <property type="match status" value="1"/>
</dbReference>
<dbReference type="Pfam" id="PF10555">
    <property type="entry name" value="MraY_sig1"/>
    <property type="match status" value="1"/>
</dbReference>
<dbReference type="PROSITE" id="PS01347">
    <property type="entry name" value="MRAY_1"/>
    <property type="match status" value="1"/>
</dbReference>
<dbReference type="PROSITE" id="PS01348">
    <property type="entry name" value="MRAY_2"/>
    <property type="match status" value="1"/>
</dbReference>
<sequence>MRAILFGGGLALLVSLLGTRVAINQFTRLGYGQEIRDDGPTSHHTKRGTPTMGGVVIILATVVGYFGAKLITGDMPTASALLLLFLLVGTGLVGFVDDFIKISKQRSLGLRSKAKMIGLTVVALVFGILSLSSWLEDDRGQSPASRHISFIRDIGWITLPTVVVLLLIWLIIAATSNGVNLTDGLDGLATGASVMVFGAYMFVNIWQNNQWCGQTGLDQPNLCYEVRDPLDLAVVAAAITGACFGFLWWNASPAAIFMGDTGSLALGGALAGLAILTRTELLLIILGGLFVMETVSVMLQVATFKATKRLTGTGRRLFRIAPIHHHFEMLGWEQVTVVIRFWIITGICVAAGLGVFYAEWVAGI</sequence>
<comment type="function">
    <text evidence="1">Catalyzes the initial step of the lipid cycle reactions in the biosynthesis of the cell wall peptidoglycan: transfers peptidoglycan precursor phospho-MurNAc-pentapeptide from UDP-MurNAc-pentapeptide onto the lipid carrier undecaprenyl phosphate, yielding undecaprenyl-pyrophosphoryl-MurNAc-pentapeptide, known as lipid I.</text>
</comment>
<comment type="catalytic activity">
    <reaction evidence="1">
        <text>UDP-N-acetyl-alpha-D-muramoyl-L-alanyl-gamma-D-glutamyl-meso-2,6-diaminopimeloyl-D-alanyl-D-alanine + di-trans,octa-cis-undecaprenyl phosphate = di-trans,octa-cis-undecaprenyl diphospho-N-acetyl-alpha-D-muramoyl-L-alanyl-D-glutamyl-meso-2,6-diaminopimeloyl-D-alanyl-D-alanine + UMP</text>
        <dbReference type="Rhea" id="RHEA:28386"/>
        <dbReference type="ChEBI" id="CHEBI:57865"/>
        <dbReference type="ChEBI" id="CHEBI:60392"/>
        <dbReference type="ChEBI" id="CHEBI:61386"/>
        <dbReference type="ChEBI" id="CHEBI:61387"/>
        <dbReference type="EC" id="2.7.8.13"/>
    </reaction>
</comment>
<comment type="cofactor">
    <cofactor evidence="1">
        <name>Mg(2+)</name>
        <dbReference type="ChEBI" id="CHEBI:18420"/>
    </cofactor>
</comment>
<comment type="pathway">
    <text evidence="1">Cell wall biogenesis; peptidoglycan biosynthesis.</text>
</comment>
<comment type="subcellular location">
    <subcellularLocation>
        <location evidence="1">Cell membrane</location>
        <topology evidence="1">Multi-pass membrane protein</topology>
    </subcellularLocation>
</comment>
<comment type="similarity">
    <text evidence="1">Belongs to the glycosyltransferase 4 family. MraY subfamily.</text>
</comment>
<reference key="1">
    <citation type="submission" date="2006-12" db="EMBL/GenBank/DDBJ databases">
        <title>Complete sequence of chromosome 1 of Nocardioides sp. JS614.</title>
        <authorList>
            <person name="Copeland A."/>
            <person name="Lucas S."/>
            <person name="Lapidus A."/>
            <person name="Barry K."/>
            <person name="Detter J.C."/>
            <person name="Glavina del Rio T."/>
            <person name="Hammon N."/>
            <person name="Israni S."/>
            <person name="Dalin E."/>
            <person name="Tice H."/>
            <person name="Pitluck S."/>
            <person name="Thompson L.S."/>
            <person name="Brettin T."/>
            <person name="Bruce D."/>
            <person name="Han C."/>
            <person name="Tapia R."/>
            <person name="Schmutz J."/>
            <person name="Larimer F."/>
            <person name="Land M."/>
            <person name="Hauser L."/>
            <person name="Kyrpides N."/>
            <person name="Kim E."/>
            <person name="Mattes T."/>
            <person name="Gossett J."/>
            <person name="Richardson P."/>
        </authorList>
    </citation>
    <scope>NUCLEOTIDE SEQUENCE [LARGE SCALE GENOMIC DNA]</scope>
    <source>
        <strain>ATCC BAA-499 / JS614</strain>
    </source>
</reference>
<accession>A1SL83</accession>
<gene>
    <name evidence="1" type="primary">mraY</name>
    <name type="ordered locus">Noca_3066</name>
</gene>
<feature type="chain" id="PRO_1000003023" description="Phospho-N-acetylmuramoyl-pentapeptide-transferase">
    <location>
        <begin position="1"/>
        <end position="364"/>
    </location>
</feature>
<feature type="transmembrane region" description="Helical" evidence="1">
    <location>
        <begin position="3"/>
        <end position="23"/>
    </location>
</feature>
<feature type="transmembrane region" description="Helical" evidence="1">
    <location>
        <begin position="51"/>
        <end position="71"/>
    </location>
</feature>
<feature type="transmembrane region" description="Helical" evidence="1">
    <location>
        <begin position="80"/>
        <end position="100"/>
    </location>
</feature>
<feature type="transmembrane region" description="Helical" evidence="1">
    <location>
        <begin position="116"/>
        <end position="136"/>
    </location>
</feature>
<feature type="transmembrane region" description="Helical" evidence="1">
    <location>
        <begin position="154"/>
        <end position="174"/>
    </location>
</feature>
<feature type="transmembrane region" description="Helical" evidence="1">
    <location>
        <begin position="185"/>
        <end position="205"/>
    </location>
</feature>
<feature type="transmembrane region" description="Helical" evidence="1">
    <location>
        <begin position="229"/>
        <end position="249"/>
    </location>
</feature>
<feature type="transmembrane region" description="Helical" evidence="1">
    <location>
        <begin position="256"/>
        <end position="276"/>
    </location>
</feature>
<feature type="transmembrane region" description="Helical" evidence="1">
    <location>
        <begin position="281"/>
        <end position="301"/>
    </location>
</feature>
<feature type="transmembrane region" description="Helical" evidence="1">
    <location>
        <begin position="341"/>
        <end position="361"/>
    </location>
</feature>
<protein>
    <recommendedName>
        <fullName evidence="1">Phospho-N-acetylmuramoyl-pentapeptide-transferase</fullName>
        <ecNumber evidence="1">2.7.8.13</ecNumber>
    </recommendedName>
    <alternativeName>
        <fullName evidence="1">UDP-MurNAc-pentapeptide phosphotransferase</fullName>
    </alternativeName>
</protein>
<proteinExistence type="inferred from homology"/>
<evidence type="ECO:0000255" key="1">
    <source>
        <dbReference type="HAMAP-Rule" id="MF_00038"/>
    </source>
</evidence>
<organism>
    <name type="scientific">Nocardioides sp. (strain ATCC BAA-499 / JS614)</name>
    <dbReference type="NCBI Taxonomy" id="196162"/>
    <lineage>
        <taxon>Bacteria</taxon>
        <taxon>Bacillati</taxon>
        <taxon>Actinomycetota</taxon>
        <taxon>Actinomycetes</taxon>
        <taxon>Propionibacteriales</taxon>
        <taxon>Nocardioidaceae</taxon>
        <taxon>Nocardioides</taxon>
    </lineage>
</organism>
<keyword id="KW-0131">Cell cycle</keyword>
<keyword id="KW-0132">Cell division</keyword>
<keyword id="KW-1003">Cell membrane</keyword>
<keyword id="KW-0133">Cell shape</keyword>
<keyword id="KW-0961">Cell wall biogenesis/degradation</keyword>
<keyword id="KW-0460">Magnesium</keyword>
<keyword id="KW-0472">Membrane</keyword>
<keyword id="KW-0479">Metal-binding</keyword>
<keyword id="KW-0573">Peptidoglycan synthesis</keyword>
<keyword id="KW-1185">Reference proteome</keyword>
<keyword id="KW-0808">Transferase</keyword>
<keyword id="KW-0812">Transmembrane</keyword>
<keyword id="KW-1133">Transmembrane helix</keyword>